<protein>
    <recommendedName>
        <fullName evidence="1">Small ribosomal subunit protein uS3</fullName>
    </recommendedName>
    <alternativeName>
        <fullName evidence="2">30S ribosomal protein S3</fullName>
    </alternativeName>
</protein>
<dbReference type="EMBL" id="CP000308">
    <property type="protein sequence ID" value="ABG15219.1"/>
    <property type="molecule type" value="Genomic_DNA"/>
</dbReference>
<dbReference type="RefSeq" id="WP_002218938.1">
    <property type="nucleotide sequence ID" value="NC_008150.1"/>
</dbReference>
<dbReference type="SMR" id="Q1C2V3"/>
<dbReference type="KEGG" id="ypa:YPA_3257"/>
<dbReference type="Proteomes" id="UP000001971">
    <property type="component" value="Chromosome"/>
</dbReference>
<dbReference type="GO" id="GO:0022627">
    <property type="term" value="C:cytosolic small ribosomal subunit"/>
    <property type="evidence" value="ECO:0007669"/>
    <property type="project" value="TreeGrafter"/>
</dbReference>
<dbReference type="GO" id="GO:0003729">
    <property type="term" value="F:mRNA binding"/>
    <property type="evidence" value="ECO:0007669"/>
    <property type="project" value="UniProtKB-UniRule"/>
</dbReference>
<dbReference type="GO" id="GO:0019843">
    <property type="term" value="F:rRNA binding"/>
    <property type="evidence" value="ECO:0007669"/>
    <property type="project" value="UniProtKB-UniRule"/>
</dbReference>
<dbReference type="GO" id="GO:0003735">
    <property type="term" value="F:structural constituent of ribosome"/>
    <property type="evidence" value="ECO:0007669"/>
    <property type="project" value="InterPro"/>
</dbReference>
<dbReference type="GO" id="GO:0006412">
    <property type="term" value="P:translation"/>
    <property type="evidence" value="ECO:0007669"/>
    <property type="project" value="UniProtKB-UniRule"/>
</dbReference>
<dbReference type="CDD" id="cd02412">
    <property type="entry name" value="KH-II_30S_S3"/>
    <property type="match status" value="1"/>
</dbReference>
<dbReference type="FunFam" id="3.30.1140.32:FF:000001">
    <property type="entry name" value="30S ribosomal protein S3"/>
    <property type="match status" value="1"/>
</dbReference>
<dbReference type="FunFam" id="3.30.300.20:FF:000001">
    <property type="entry name" value="30S ribosomal protein S3"/>
    <property type="match status" value="1"/>
</dbReference>
<dbReference type="Gene3D" id="3.30.300.20">
    <property type="match status" value="1"/>
</dbReference>
<dbReference type="Gene3D" id="3.30.1140.32">
    <property type="entry name" value="Ribosomal protein S3, C-terminal domain"/>
    <property type="match status" value="1"/>
</dbReference>
<dbReference type="HAMAP" id="MF_01309_B">
    <property type="entry name" value="Ribosomal_uS3_B"/>
    <property type="match status" value="1"/>
</dbReference>
<dbReference type="InterPro" id="IPR004087">
    <property type="entry name" value="KH_dom"/>
</dbReference>
<dbReference type="InterPro" id="IPR015946">
    <property type="entry name" value="KH_dom-like_a/b"/>
</dbReference>
<dbReference type="InterPro" id="IPR004044">
    <property type="entry name" value="KH_dom_type_2"/>
</dbReference>
<dbReference type="InterPro" id="IPR009019">
    <property type="entry name" value="KH_sf_prok-type"/>
</dbReference>
<dbReference type="InterPro" id="IPR036419">
    <property type="entry name" value="Ribosomal_S3_C_sf"/>
</dbReference>
<dbReference type="InterPro" id="IPR005704">
    <property type="entry name" value="Ribosomal_uS3_bac-typ"/>
</dbReference>
<dbReference type="InterPro" id="IPR001351">
    <property type="entry name" value="Ribosomal_uS3_C"/>
</dbReference>
<dbReference type="InterPro" id="IPR018280">
    <property type="entry name" value="Ribosomal_uS3_CS"/>
</dbReference>
<dbReference type="NCBIfam" id="TIGR01009">
    <property type="entry name" value="rpsC_bact"/>
    <property type="match status" value="1"/>
</dbReference>
<dbReference type="PANTHER" id="PTHR11760">
    <property type="entry name" value="30S/40S RIBOSOMAL PROTEIN S3"/>
    <property type="match status" value="1"/>
</dbReference>
<dbReference type="PANTHER" id="PTHR11760:SF19">
    <property type="entry name" value="SMALL RIBOSOMAL SUBUNIT PROTEIN US3C"/>
    <property type="match status" value="1"/>
</dbReference>
<dbReference type="Pfam" id="PF07650">
    <property type="entry name" value="KH_2"/>
    <property type="match status" value="1"/>
</dbReference>
<dbReference type="Pfam" id="PF00189">
    <property type="entry name" value="Ribosomal_S3_C"/>
    <property type="match status" value="1"/>
</dbReference>
<dbReference type="SMART" id="SM00322">
    <property type="entry name" value="KH"/>
    <property type="match status" value="1"/>
</dbReference>
<dbReference type="SUPFAM" id="SSF54814">
    <property type="entry name" value="Prokaryotic type KH domain (KH-domain type II)"/>
    <property type="match status" value="1"/>
</dbReference>
<dbReference type="SUPFAM" id="SSF54821">
    <property type="entry name" value="Ribosomal protein S3 C-terminal domain"/>
    <property type="match status" value="1"/>
</dbReference>
<dbReference type="PROSITE" id="PS50823">
    <property type="entry name" value="KH_TYPE_2"/>
    <property type="match status" value="1"/>
</dbReference>
<dbReference type="PROSITE" id="PS00548">
    <property type="entry name" value="RIBOSOMAL_S3"/>
    <property type="match status" value="1"/>
</dbReference>
<name>RS3_YERPA</name>
<gene>
    <name evidence="1" type="primary">rpsC</name>
    <name type="ordered locus">YPA_3257</name>
</gene>
<organism>
    <name type="scientific">Yersinia pestis bv. Antiqua (strain Antiqua)</name>
    <dbReference type="NCBI Taxonomy" id="360102"/>
    <lineage>
        <taxon>Bacteria</taxon>
        <taxon>Pseudomonadati</taxon>
        <taxon>Pseudomonadota</taxon>
        <taxon>Gammaproteobacteria</taxon>
        <taxon>Enterobacterales</taxon>
        <taxon>Yersiniaceae</taxon>
        <taxon>Yersinia</taxon>
    </lineage>
</organism>
<comment type="function">
    <text evidence="1">Binds the lower part of the 30S subunit head. Binds mRNA in the 70S ribosome, positioning it for translation.</text>
</comment>
<comment type="subunit">
    <text evidence="1">Part of the 30S ribosomal subunit. Forms a tight complex with proteins S10 and S14.</text>
</comment>
<comment type="similarity">
    <text evidence="1">Belongs to the universal ribosomal protein uS3 family.</text>
</comment>
<accession>Q1C2V3</accession>
<proteinExistence type="inferred from homology"/>
<keyword id="KW-0687">Ribonucleoprotein</keyword>
<keyword id="KW-0689">Ribosomal protein</keyword>
<keyword id="KW-0694">RNA-binding</keyword>
<keyword id="KW-0699">rRNA-binding</keyword>
<feature type="chain" id="PRO_0000293916" description="Small ribosomal subunit protein uS3">
    <location>
        <begin position="1"/>
        <end position="232"/>
    </location>
</feature>
<feature type="domain" description="KH type-2" evidence="1">
    <location>
        <begin position="39"/>
        <end position="107"/>
    </location>
</feature>
<reference key="1">
    <citation type="journal article" date="2006" name="J. Bacteriol.">
        <title>Complete genome sequence of Yersinia pestis strains Antiqua and Nepal516: evidence of gene reduction in an emerging pathogen.</title>
        <authorList>
            <person name="Chain P.S.G."/>
            <person name="Hu P."/>
            <person name="Malfatti S.A."/>
            <person name="Radnedge L."/>
            <person name="Larimer F."/>
            <person name="Vergez L.M."/>
            <person name="Worsham P."/>
            <person name="Chu M.C."/>
            <person name="Andersen G.L."/>
        </authorList>
    </citation>
    <scope>NUCLEOTIDE SEQUENCE [LARGE SCALE GENOMIC DNA]</scope>
    <source>
        <strain>Antiqua</strain>
    </source>
</reference>
<evidence type="ECO:0000255" key="1">
    <source>
        <dbReference type="HAMAP-Rule" id="MF_01309"/>
    </source>
</evidence>
<evidence type="ECO:0000305" key="2"/>
<sequence>MGQKVHPNGIRLGIVKAWNSTWYANTKEFADNLDSDFKVRQFLTKELAKASVSRIVIERPAKSIRVTIHTARPGIVIGKKGEDVEKLRKVVADIAGVPAQINIAEVRKPELDAKLVADSIISQLERRVMFRRAMKRAVQNAMRLGAKGIKVEVSGRLGGAEIARTEWYREGRVPLHTLRADIDYNTSEAHTTYGVIGVKVWIFKGEILGGMAAVEQPEPAAQPKKQQRKGRK</sequence>